<protein>
    <recommendedName>
        <fullName>Pleckstrin homology-like domain family A member 2</fullName>
    </recommendedName>
    <alternativeName>
        <fullName>Imprinted in placenta and liver protein</fullName>
    </alternativeName>
</protein>
<feature type="chain" id="PRO_0000369387" description="Pleckstrin homology-like domain family A member 2">
    <location>
        <begin position="1"/>
        <end position="136"/>
    </location>
</feature>
<feature type="domain" description="PH" evidence="2">
    <location>
        <begin position="9"/>
        <end position="103"/>
    </location>
</feature>
<comment type="function">
    <text evidence="1">Plays a role in regulating placenta growth. May act via its PH domain that competes with other PH domain-containing proteins, thereby preventing their binding to membrane lipids (By similarity).</text>
</comment>
<comment type="subcellular location">
    <subcellularLocation>
        <location evidence="1">Cytoplasm</location>
    </subcellularLocation>
    <subcellularLocation>
        <location evidence="1">Membrane</location>
        <topology evidence="1">Peripheral membrane protein</topology>
    </subcellularLocation>
</comment>
<comment type="domain">
    <text evidence="1">The PH domain binds phosphoinositides with a broad specificity. It may compete with the PH domain of some other proteins, thereby interfering with their binding to phosphatidylinositol 4,5-bisphosphate (PIP2) and phosphatidylinositol 3,4,5-trisphosphate (PIP3) (By similarity).</text>
</comment>
<comment type="similarity">
    <text evidence="3">Belongs to the PHLDA2 family.</text>
</comment>
<organism>
    <name type="scientific">Danio rerio</name>
    <name type="common">Zebrafish</name>
    <name type="synonym">Brachydanio rerio</name>
    <dbReference type="NCBI Taxonomy" id="7955"/>
    <lineage>
        <taxon>Eukaryota</taxon>
        <taxon>Metazoa</taxon>
        <taxon>Chordata</taxon>
        <taxon>Craniata</taxon>
        <taxon>Vertebrata</taxon>
        <taxon>Euteleostomi</taxon>
        <taxon>Actinopterygii</taxon>
        <taxon>Neopterygii</taxon>
        <taxon>Teleostei</taxon>
        <taxon>Ostariophysi</taxon>
        <taxon>Cypriniformes</taxon>
        <taxon>Danionidae</taxon>
        <taxon>Danioninae</taxon>
        <taxon>Danio</taxon>
    </lineage>
</organism>
<gene>
    <name type="primary">phlda2</name>
    <name type="synonym">ipl</name>
    <name type="ORF">zgc:110459</name>
</gene>
<evidence type="ECO:0000250" key="1"/>
<evidence type="ECO:0000255" key="2">
    <source>
        <dbReference type="PROSITE-ProRule" id="PRU00145"/>
    </source>
</evidence>
<evidence type="ECO:0000305" key="3"/>
<dbReference type="EMBL" id="BC095282">
    <property type="protein sequence ID" value="AAH95282.1"/>
    <property type="molecule type" value="mRNA"/>
</dbReference>
<dbReference type="EMBL" id="BC155735">
    <property type="protein sequence ID" value="AAI55736.1"/>
    <property type="molecule type" value="mRNA"/>
</dbReference>
<dbReference type="RefSeq" id="NP_001018432.1">
    <property type="nucleotide sequence ID" value="NM_001020596.2"/>
</dbReference>
<dbReference type="SMR" id="Q503L1"/>
<dbReference type="FunCoup" id="Q503L1">
    <property type="interactions" value="1017"/>
</dbReference>
<dbReference type="STRING" id="7955.ENSDARP00000062929"/>
<dbReference type="PaxDb" id="7955-ENSDARP00000062929"/>
<dbReference type="Ensembl" id="ENSDART00000062930">
    <property type="protein sequence ID" value="ENSDARP00000062929"/>
    <property type="gene ID" value="ENSDARG00000042874"/>
</dbReference>
<dbReference type="Ensembl" id="ENSDART00000191331">
    <property type="protein sequence ID" value="ENSDARP00000147363"/>
    <property type="gene ID" value="ENSDARG00000042874"/>
</dbReference>
<dbReference type="Ensembl" id="ENSDART00000192216">
    <property type="protein sequence ID" value="ENSDARP00000156613"/>
    <property type="gene ID" value="ENSDARG00000114844"/>
</dbReference>
<dbReference type="GeneID" id="553622"/>
<dbReference type="KEGG" id="dre:553622"/>
<dbReference type="AGR" id="ZFIN:ZDB-GENE-050522-73"/>
<dbReference type="CTD" id="7262"/>
<dbReference type="ZFIN" id="ZDB-GENE-050522-73">
    <property type="gene designation" value="phlda2"/>
</dbReference>
<dbReference type="eggNOG" id="ENOG502RXZA">
    <property type="taxonomic scope" value="Eukaryota"/>
</dbReference>
<dbReference type="HOGENOM" id="CLU_062639_1_0_1"/>
<dbReference type="InParanoid" id="Q503L1"/>
<dbReference type="OMA" id="CWHAEIT"/>
<dbReference type="OrthoDB" id="9630709at2759"/>
<dbReference type="PhylomeDB" id="Q503L1"/>
<dbReference type="TreeFam" id="TF332320"/>
<dbReference type="PRO" id="PR:Q503L1"/>
<dbReference type="Proteomes" id="UP000000437">
    <property type="component" value="Alternate scaffold 25"/>
</dbReference>
<dbReference type="Proteomes" id="UP000000437">
    <property type="component" value="Chromosome 25"/>
</dbReference>
<dbReference type="Bgee" id="ENSDARG00000042874">
    <property type="expression patterns" value="Expressed in heart and 21 other cell types or tissues"/>
</dbReference>
<dbReference type="ExpressionAtlas" id="Q503L1">
    <property type="expression patterns" value="baseline and differential"/>
</dbReference>
<dbReference type="GO" id="GO:0005737">
    <property type="term" value="C:cytoplasm"/>
    <property type="evidence" value="ECO:0007669"/>
    <property type="project" value="UniProtKB-SubCell"/>
</dbReference>
<dbReference type="GO" id="GO:0016020">
    <property type="term" value="C:membrane"/>
    <property type="evidence" value="ECO:0007669"/>
    <property type="project" value="UniProtKB-SubCell"/>
</dbReference>
<dbReference type="GO" id="GO:1901981">
    <property type="term" value="F:phosphatidylinositol phosphate binding"/>
    <property type="evidence" value="ECO:0007669"/>
    <property type="project" value="InterPro"/>
</dbReference>
<dbReference type="GO" id="GO:0043065">
    <property type="term" value="P:positive regulation of apoptotic process"/>
    <property type="evidence" value="ECO:0007669"/>
    <property type="project" value="InterPro"/>
</dbReference>
<dbReference type="CDD" id="cd00821">
    <property type="entry name" value="PH"/>
    <property type="match status" value="1"/>
</dbReference>
<dbReference type="Gene3D" id="2.30.29.30">
    <property type="entry name" value="Pleckstrin-homology domain (PH domain)/Phosphotyrosine-binding domain (PTB)"/>
    <property type="match status" value="1"/>
</dbReference>
<dbReference type="InterPro" id="IPR011993">
    <property type="entry name" value="PH-like_dom_sf"/>
</dbReference>
<dbReference type="InterPro" id="IPR001849">
    <property type="entry name" value="PH_domain"/>
</dbReference>
<dbReference type="InterPro" id="IPR042832">
    <property type="entry name" value="PHLA1/2/3"/>
</dbReference>
<dbReference type="PANTHER" id="PTHR15478:SF8">
    <property type="entry name" value="PLECKSTRIN HOMOLOGY-LIKE DOMAIN FAMILY A MEMBER 2"/>
    <property type="match status" value="1"/>
</dbReference>
<dbReference type="PANTHER" id="PTHR15478">
    <property type="entry name" value="PLECKSTRIN HOMOLOGY-LIKE DOMAIN, PQ-RICH PROTEIN"/>
    <property type="match status" value="1"/>
</dbReference>
<dbReference type="Pfam" id="PF00169">
    <property type="entry name" value="PH"/>
    <property type="match status" value="1"/>
</dbReference>
<dbReference type="SMART" id="SM00233">
    <property type="entry name" value="PH"/>
    <property type="match status" value="1"/>
</dbReference>
<dbReference type="SUPFAM" id="SSF50729">
    <property type="entry name" value="PH domain-like"/>
    <property type="match status" value="1"/>
</dbReference>
<dbReference type="PROSITE" id="PS50003">
    <property type="entry name" value="PH_DOMAIN"/>
    <property type="match status" value="1"/>
</dbReference>
<accession>Q503L1</accession>
<keyword id="KW-0963">Cytoplasm</keyword>
<keyword id="KW-0472">Membrane</keyword>
<keyword id="KW-1185">Reference proteome</keyword>
<sequence>MTGSDISHILKEGELEKRSDNLLQFWKRKTCVLTTDSLNIYTDQQKKNKSKELKLQSIKKVDCVEHTGKFVYFTIVTTDNKEIDFRCSDEKNCWNAVIAIALVNFQNRKAIQGFKTQKESENTSLGQQERCMARAP</sequence>
<name>PHLA2_DANRE</name>
<proteinExistence type="evidence at transcript level"/>
<reference key="1">
    <citation type="submission" date="2007-12" db="EMBL/GenBank/DDBJ databases">
        <authorList>
            <consortium name="NIH - Zebrafish Gene Collection (ZGC) project"/>
        </authorList>
    </citation>
    <scope>NUCLEOTIDE SEQUENCE [LARGE SCALE MRNA]</scope>
    <source>
        <tissue>Embryo</tissue>
        <tissue>Olfactory epithelium</tissue>
    </source>
</reference>